<protein>
    <recommendedName>
        <fullName evidence="1">Germination protease</fullName>
        <ecNumber evidence="1">3.4.24.78</ecNumber>
    </recommendedName>
    <alternativeName>
        <fullName evidence="1">GPR endopeptidase</fullName>
    </alternativeName>
    <alternativeName>
        <fullName evidence="1">Germination proteinase</fullName>
    </alternativeName>
    <alternativeName>
        <fullName evidence="1">Spore protease</fullName>
    </alternativeName>
</protein>
<evidence type="ECO:0000255" key="1">
    <source>
        <dbReference type="HAMAP-Rule" id="MF_00626"/>
    </source>
</evidence>
<accession>P59406</accession>
<comment type="function">
    <text evidence="1">Initiates the rapid degradation of small, acid-soluble proteins during spore germination.</text>
</comment>
<comment type="catalytic activity">
    <reaction evidence="1">
        <text>Endopeptidase action with P4 Glu or Asp, P1 preferably Glu &gt; Asp, P1' hydrophobic and P2' Ala.</text>
        <dbReference type="EC" id="3.4.24.78"/>
    </reaction>
</comment>
<comment type="subunit">
    <text evidence="1">Homotetramer.</text>
</comment>
<comment type="PTM">
    <text evidence="1">Autoproteolytically processed. The inactive tetrameric zymogen termed p46 autoprocesses to a smaller form termed p41, which is active only during spore germination.</text>
</comment>
<comment type="similarity">
    <text evidence="1">Belongs to the peptidase A25 family.</text>
</comment>
<feature type="propeptide" id="PRO_0000026876" evidence="1">
    <location>
        <begin position="1"/>
        <end position="6"/>
    </location>
</feature>
<feature type="chain" id="PRO_0000026877" description="Germination protease">
    <location>
        <begin position="7"/>
        <end position="323"/>
    </location>
</feature>
<dbReference type="EC" id="3.4.24.78" evidence="1"/>
<dbReference type="EMBL" id="AE015927">
    <property type="protein sequence ID" value="AAO36542.1"/>
    <property type="molecule type" value="Genomic_DNA"/>
</dbReference>
<dbReference type="RefSeq" id="WP_011100200.1">
    <property type="nucleotide sequence ID" value="NC_004557.1"/>
</dbReference>
<dbReference type="SMR" id="P59406"/>
<dbReference type="STRING" id="212717.CTC_02040"/>
<dbReference type="MEROPS" id="A25.001"/>
<dbReference type="GeneID" id="24254200"/>
<dbReference type="KEGG" id="ctc:CTC_02040"/>
<dbReference type="HOGENOM" id="CLU_055087_1_0_9"/>
<dbReference type="OrthoDB" id="9777293at2"/>
<dbReference type="Proteomes" id="UP000001412">
    <property type="component" value="Chromosome"/>
</dbReference>
<dbReference type="GO" id="GO:0004222">
    <property type="term" value="F:metalloendopeptidase activity"/>
    <property type="evidence" value="ECO:0007669"/>
    <property type="project" value="UniProtKB-UniRule"/>
</dbReference>
<dbReference type="GO" id="GO:0006508">
    <property type="term" value="P:proteolysis"/>
    <property type="evidence" value="ECO:0007669"/>
    <property type="project" value="UniProtKB-UniRule"/>
</dbReference>
<dbReference type="GO" id="GO:0009847">
    <property type="term" value="P:spore germination"/>
    <property type="evidence" value="ECO:0007669"/>
    <property type="project" value="UniProtKB-UniRule"/>
</dbReference>
<dbReference type="Gene3D" id="3.40.50.1450">
    <property type="entry name" value="HybD-like"/>
    <property type="match status" value="1"/>
</dbReference>
<dbReference type="HAMAP" id="MF_00626">
    <property type="entry name" value="Germination_prot"/>
    <property type="match status" value="1"/>
</dbReference>
<dbReference type="InterPro" id="IPR023430">
    <property type="entry name" value="Pept_HybD-like_dom_sf"/>
</dbReference>
<dbReference type="InterPro" id="IPR005080">
    <property type="entry name" value="Peptidase_A25"/>
</dbReference>
<dbReference type="NCBIfam" id="TIGR01441">
    <property type="entry name" value="GPR"/>
    <property type="match status" value="1"/>
</dbReference>
<dbReference type="Pfam" id="PF03418">
    <property type="entry name" value="Peptidase_A25"/>
    <property type="match status" value="2"/>
</dbReference>
<dbReference type="PIRSF" id="PIRSF019549">
    <property type="entry name" value="Peptidase_A25"/>
    <property type="match status" value="1"/>
</dbReference>
<dbReference type="SUPFAM" id="SSF53163">
    <property type="entry name" value="HybD-like"/>
    <property type="match status" value="1"/>
</dbReference>
<sequence length="323" mass="35678">MSVRTDLAVEAKEIYEEKNAGEIPGVELKEYRQGRIKVTEVNVLNEQGEKAMNKAIGNYITLEIPDINQYDTQYKEHISKILAKTLMPLLKIDDSMTALVVGLGNWNITPDALGPKVIEKIMITRHLKEYIPNEIDEGIRPVCGISPGVLGITGIETAEIIKAVSNKIKPDIILCIDALASRRLERVNRTIQIGNTGISPGAGVGNRRMELNEKTLGVPVIAIGVPTVVDAATVANDTIDMVLDEMIKVADKDKNFYNMLKSLDRDEKERMIKEVLNPYVGELMVTPKDVDTLMDSISKIISTGINIALQPALELEDINSYLN</sequence>
<name>GPR_CLOTE</name>
<organism>
    <name type="scientific">Clostridium tetani (strain Massachusetts / E88)</name>
    <dbReference type="NCBI Taxonomy" id="212717"/>
    <lineage>
        <taxon>Bacteria</taxon>
        <taxon>Bacillati</taxon>
        <taxon>Bacillota</taxon>
        <taxon>Clostridia</taxon>
        <taxon>Eubacteriales</taxon>
        <taxon>Clostridiaceae</taxon>
        <taxon>Clostridium</taxon>
    </lineage>
</organism>
<proteinExistence type="inferred from homology"/>
<gene>
    <name evidence="1" type="primary">gpr</name>
    <name type="ordered locus">CTC_02040</name>
</gene>
<reference key="1">
    <citation type="journal article" date="2003" name="Proc. Natl. Acad. Sci. U.S.A.">
        <title>The genome sequence of Clostridium tetani, the causative agent of tetanus disease.</title>
        <authorList>
            <person name="Brueggemann H."/>
            <person name="Baeumer S."/>
            <person name="Fricke W.F."/>
            <person name="Wiezer A."/>
            <person name="Liesegang H."/>
            <person name="Decker I."/>
            <person name="Herzberg C."/>
            <person name="Martinez-Arias R."/>
            <person name="Merkl R."/>
            <person name="Henne A."/>
            <person name="Gottschalk G."/>
        </authorList>
    </citation>
    <scope>NUCLEOTIDE SEQUENCE [LARGE SCALE GENOMIC DNA]</scope>
    <source>
        <strain>Massachusetts / E88</strain>
    </source>
</reference>
<keyword id="KW-0378">Hydrolase</keyword>
<keyword id="KW-0645">Protease</keyword>
<keyword id="KW-1185">Reference proteome</keyword>
<keyword id="KW-0865">Zymogen</keyword>